<organism>
    <name type="scientific">Gloeobacter violaceus (strain ATCC 29082 / PCC 7421)</name>
    <dbReference type="NCBI Taxonomy" id="251221"/>
    <lineage>
        <taxon>Bacteria</taxon>
        <taxon>Bacillati</taxon>
        <taxon>Cyanobacteriota</taxon>
        <taxon>Cyanophyceae</taxon>
        <taxon>Gloeobacterales</taxon>
        <taxon>Gloeobacteraceae</taxon>
        <taxon>Gloeobacter</taxon>
    </lineage>
</organism>
<protein>
    <recommendedName>
        <fullName evidence="1">Acetylornithine aminotransferase</fullName>
        <shortName evidence="1">ACOAT</shortName>
        <ecNumber evidence="1">2.6.1.11</ecNumber>
    </recommendedName>
</protein>
<gene>
    <name evidence="1" type="primary">argD</name>
    <name type="ordered locus">glr0547</name>
</gene>
<name>ARGD_GLOVI</name>
<dbReference type="EC" id="2.6.1.11" evidence="1"/>
<dbReference type="EMBL" id="BA000045">
    <property type="protein sequence ID" value="BAC88488.1"/>
    <property type="status" value="ALT_INIT"/>
    <property type="molecule type" value="Genomic_DNA"/>
</dbReference>
<dbReference type="RefSeq" id="NP_923493.1">
    <property type="nucleotide sequence ID" value="NC_005125.1"/>
</dbReference>
<dbReference type="RefSeq" id="WP_164928539.1">
    <property type="nucleotide sequence ID" value="NC_005125.1"/>
</dbReference>
<dbReference type="SMR" id="Q7NN66"/>
<dbReference type="FunCoup" id="Q7NN66">
    <property type="interactions" value="396"/>
</dbReference>
<dbReference type="STRING" id="251221.gene:10758020"/>
<dbReference type="EnsemblBacteria" id="BAC88488">
    <property type="protein sequence ID" value="BAC88488"/>
    <property type="gene ID" value="BAC88488"/>
</dbReference>
<dbReference type="KEGG" id="gvi:glr0547"/>
<dbReference type="PATRIC" id="fig|251221.4.peg.556"/>
<dbReference type="eggNOG" id="COG4992">
    <property type="taxonomic scope" value="Bacteria"/>
</dbReference>
<dbReference type="HOGENOM" id="CLU_016922_10_1_3"/>
<dbReference type="InParanoid" id="Q7NN66"/>
<dbReference type="OrthoDB" id="9807885at2"/>
<dbReference type="PhylomeDB" id="Q7NN66"/>
<dbReference type="UniPathway" id="UPA00068">
    <property type="reaction ID" value="UER00109"/>
</dbReference>
<dbReference type="Proteomes" id="UP000000557">
    <property type="component" value="Chromosome"/>
</dbReference>
<dbReference type="GO" id="GO:0005737">
    <property type="term" value="C:cytoplasm"/>
    <property type="evidence" value="ECO:0007669"/>
    <property type="project" value="UniProtKB-SubCell"/>
</dbReference>
<dbReference type="GO" id="GO:0042802">
    <property type="term" value="F:identical protein binding"/>
    <property type="evidence" value="ECO:0000318"/>
    <property type="project" value="GO_Central"/>
</dbReference>
<dbReference type="GO" id="GO:0003992">
    <property type="term" value="F:N2-acetyl-L-ornithine:2-oxoglutarate 5-aminotransferase activity"/>
    <property type="evidence" value="ECO:0007669"/>
    <property type="project" value="UniProtKB-UniRule"/>
</dbReference>
<dbReference type="GO" id="GO:0030170">
    <property type="term" value="F:pyridoxal phosphate binding"/>
    <property type="evidence" value="ECO:0000318"/>
    <property type="project" value="GO_Central"/>
</dbReference>
<dbReference type="GO" id="GO:0006526">
    <property type="term" value="P:L-arginine biosynthetic process"/>
    <property type="evidence" value="ECO:0007669"/>
    <property type="project" value="UniProtKB-UniRule"/>
</dbReference>
<dbReference type="CDD" id="cd00610">
    <property type="entry name" value="OAT_like"/>
    <property type="match status" value="1"/>
</dbReference>
<dbReference type="FunFam" id="3.40.640.10:FF:000004">
    <property type="entry name" value="Acetylornithine aminotransferase"/>
    <property type="match status" value="1"/>
</dbReference>
<dbReference type="Gene3D" id="3.90.1150.10">
    <property type="entry name" value="Aspartate Aminotransferase, domain 1"/>
    <property type="match status" value="1"/>
</dbReference>
<dbReference type="Gene3D" id="3.40.640.10">
    <property type="entry name" value="Type I PLP-dependent aspartate aminotransferase-like (Major domain)"/>
    <property type="match status" value="1"/>
</dbReference>
<dbReference type="HAMAP" id="MF_01107">
    <property type="entry name" value="ArgD_aminotrans_3"/>
    <property type="match status" value="1"/>
</dbReference>
<dbReference type="InterPro" id="IPR004636">
    <property type="entry name" value="AcOrn/SuccOrn_fam"/>
</dbReference>
<dbReference type="InterPro" id="IPR005814">
    <property type="entry name" value="Aminotrans_3"/>
</dbReference>
<dbReference type="InterPro" id="IPR049704">
    <property type="entry name" value="Aminotrans_3_PPA_site"/>
</dbReference>
<dbReference type="InterPro" id="IPR050103">
    <property type="entry name" value="Class-III_PLP-dep_AT"/>
</dbReference>
<dbReference type="InterPro" id="IPR015424">
    <property type="entry name" value="PyrdxlP-dep_Trfase"/>
</dbReference>
<dbReference type="InterPro" id="IPR015421">
    <property type="entry name" value="PyrdxlP-dep_Trfase_major"/>
</dbReference>
<dbReference type="InterPro" id="IPR015422">
    <property type="entry name" value="PyrdxlP-dep_Trfase_small"/>
</dbReference>
<dbReference type="NCBIfam" id="TIGR00707">
    <property type="entry name" value="argD"/>
    <property type="match status" value="1"/>
</dbReference>
<dbReference type="NCBIfam" id="NF002325">
    <property type="entry name" value="PRK01278.1"/>
    <property type="match status" value="1"/>
</dbReference>
<dbReference type="NCBIfam" id="NF002874">
    <property type="entry name" value="PRK03244.1"/>
    <property type="match status" value="1"/>
</dbReference>
<dbReference type="PANTHER" id="PTHR11986:SF79">
    <property type="entry name" value="ACETYLORNITHINE AMINOTRANSFERASE, MITOCHONDRIAL"/>
    <property type="match status" value="1"/>
</dbReference>
<dbReference type="PANTHER" id="PTHR11986">
    <property type="entry name" value="AMINOTRANSFERASE CLASS III"/>
    <property type="match status" value="1"/>
</dbReference>
<dbReference type="Pfam" id="PF00202">
    <property type="entry name" value="Aminotran_3"/>
    <property type="match status" value="1"/>
</dbReference>
<dbReference type="PIRSF" id="PIRSF000521">
    <property type="entry name" value="Transaminase_4ab_Lys_Orn"/>
    <property type="match status" value="1"/>
</dbReference>
<dbReference type="SUPFAM" id="SSF53383">
    <property type="entry name" value="PLP-dependent transferases"/>
    <property type="match status" value="1"/>
</dbReference>
<dbReference type="PROSITE" id="PS00600">
    <property type="entry name" value="AA_TRANSFER_CLASS_3"/>
    <property type="match status" value="1"/>
</dbReference>
<evidence type="ECO:0000255" key="1">
    <source>
        <dbReference type="HAMAP-Rule" id="MF_01107"/>
    </source>
</evidence>
<evidence type="ECO:0000305" key="2"/>
<keyword id="KW-0028">Amino-acid biosynthesis</keyword>
<keyword id="KW-0032">Aminotransferase</keyword>
<keyword id="KW-0055">Arginine biosynthesis</keyword>
<keyword id="KW-0963">Cytoplasm</keyword>
<keyword id="KW-0663">Pyridoxal phosphate</keyword>
<keyword id="KW-1185">Reference proteome</keyword>
<keyword id="KW-0808">Transferase</keyword>
<feature type="chain" id="PRO_0000112746" description="Acetylornithine aminotransferase">
    <location>
        <begin position="1"/>
        <end position="400"/>
    </location>
</feature>
<feature type="binding site" evidence="1">
    <location>
        <begin position="102"/>
        <end position="103"/>
    </location>
    <ligand>
        <name>pyridoxal 5'-phosphate</name>
        <dbReference type="ChEBI" id="CHEBI:597326"/>
    </ligand>
</feature>
<feature type="binding site" evidence="1">
    <location>
        <position position="135"/>
    </location>
    <ligand>
        <name>pyridoxal 5'-phosphate</name>
        <dbReference type="ChEBI" id="CHEBI:597326"/>
    </ligand>
</feature>
<feature type="binding site" evidence="1">
    <location>
        <position position="138"/>
    </location>
    <ligand>
        <name>N(2)-acetyl-L-ornithine</name>
        <dbReference type="ChEBI" id="CHEBI:57805"/>
    </ligand>
</feature>
<feature type="binding site" evidence="1">
    <location>
        <begin position="220"/>
        <end position="223"/>
    </location>
    <ligand>
        <name>pyridoxal 5'-phosphate</name>
        <dbReference type="ChEBI" id="CHEBI:597326"/>
    </ligand>
</feature>
<feature type="binding site" evidence="1">
    <location>
        <position position="276"/>
    </location>
    <ligand>
        <name>N(2)-acetyl-L-ornithine</name>
        <dbReference type="ChEBI" id="CHEBI:57805"/>
    </ligand>
</feature>
<feature type="binding site" evidence="1">
    <location>
        <position position="277"/>
    </location>
    <ligand>
        <name>pyridoxal 5'-phosphate</name>
        <dbReference type="ChEBI" id="CHEBI:597326"/>
    </ligand>
</feature>
<feature type="modified residue" description="N6-(pyridoxal phosphate)lysine" evidence="1">
    <location>
        <position position="249"/>
    </location>
</feature>
<comment type="catalytic activity">
    <reaction evidence="1">
        <text>N(2)-acetyl-L-ornithine + 2-oxoglutarate = N-acetyl-L-glutamate 5-semialdehyde + L-glutamate</text>
        <dbReference type="Rhea" id="RHEA:18049"/>
        <dbReference type="ChEBI" id="CHEBI:16810"/>
        <dbReference type="ChEBI" id="CHEBI:29123"/>
        <dbReference type="ChEBI" id="CHEBI:29985"/>
        <dbReference type="ChEBI" id="CHEBI:57805"/>
        <dbReference type="EC" id="2.6.1.11"/>
    </reaction>
</comment>
<comment type="cofactor">
    <cofactor evidence="1">
        <name>pyridoxal 5'-phosphate</name>
        <dbReference type="ChEBI" id="CHEBI:597326"/>
    </cofactor>
    <text evidence="1">Binds 1 pyridoxal phosphate per subunit.</text>
</comment>
<comment type="pathway">
    <text evidence="1">Amino-acid biosynthesis; L-arginine biosynthesis; N(2)-acetyl-L-ornithine from L-glutamate: step 4/4.</text>
</comment>
<comment type="subunit">
    <text evidence="1">Homodimer.</text>
</comment>
<comment type="subcellular location">
    <subcellularLocation>
        <location evidence="1">Cytoplasm</location>
    </subcellularLocation>
</comment>
<comment type="miscellaneous">
    <text evidence="1">May also have succinyldiaminopimelate aminotransferase activity, thus carrying out the corresponding step in lysine biosynthesis.</text>
</comment>
<comment type="similarity">
    <text evidence="1">Belongs to the class-III pyridoxal-phosphate-dependent aminotransferase family. ArgD subfamily.</text>
</comment>
<comment type="sequence caution" evidence="2">
    <conflict type="erroneous initiation">
        <sequence resource="EMBL-CDS" id="BAC88488"/>
    </conflict>
</comment>
<proteinExistence type="inferred from homology"/>
<reference key="1">
    <citation type="journal article" date="2003" name="DNA Res.">
        <title>Complete genome structure of Gloeobacter violaceus PCC 7421, a cyanobacterium that lacks thylakoids.</title>
        <authorList>
            <person name="Nakamura Y."/>
            <person name="Kaneko T."/>
            <person name="Sato S."/>
            <person name="Mimuro M."/>
            <person name="Miyashita H."/>
            <person name="Tsuchiya T."/>
            <person name="Sasamoto S."/>
            <person name="Watanabe A."/>
            <person name="Kawashima K."/>
            <person name="Kishida Y."/>
            <person name="Kiyokawa C."/>
            <person name="Kohara M."/>
            <person name="Matsumoto M."/>
            <person name="Matsuno A."/>
            <person name="Nakazaki N."/>
            <person name="Shimpo S."/>
            <person name="Takeuchi C."/>
            <person name="Yamada M."/>
            <person name="Tabata S."/>
        </authorList>
    </citation>
    <scope>NUCLEOTIDE SEQUENCE [LARGE SCALE GENOMIC DNA]</scope>
    <source>
        <strain>ATCC 29082 / PCC 7421</strain>
    </source>
</reference>
<sequence>MTVQQAFEQHVMHTYARFSVVFERGEGCYLEDSEGRRYLDFVAGIATCVLGHAHPVLSAAVAEQARTLIHVSNLYYTPQQACLAEWLTAHSAADQVFFCNSGAEANEGAIKLARKYGRTVLGIAEPQIICAHQSFHGRTMATVTATGQPKYQKHFHPLVPGFVHVPYNDFEALRAQVTDATAAVLIEPIQGEGGVVPGDVEFFQKLRRFCSERRILLMLDEVQTGMGRTGRLFGYEHLGIEPDVFTLAKALGGGVPIGALCAKEAFAIFEPGDHASTFGGNPLACAAALAVCQTLEAEQLVDNARERGAQLAAGLGRLVERFKPLVRTARGRGLMQGLVLSEPRAAEIVRLAMEQGLLLVSAGPEVIRFVPPLIVSAIEVDEALAILEGVFARLPVTVTA</sequence>
<accession>Q7NN66</accession>